<feature type="chain" id="PRO_0000106356" description="SH3 domain and tetratricopeptide repeat-containing protein 2">
    <location>
        <begin position="1"/>
        <end position="1288"/>
    </location>
</feature>
<feature type="domain" description="SH3 1" evidence="1">
    <location>
        <begin position="176"/>
        <end position="240"/>
    </location>
</feature>
<feature type="domain" description="SH3 2" evidence="1">
    <location>
        <begin position="268"/>
        <end position="331"/>
    </location>
</feature>
<feature type="repeat" description="TPR 1">
    <location>
        <begin position="528"/>
        <end position="561"/>
    </location>
</feature>
<feature type="repeat" description="TPR 2">
    <location>
        <begin position="757"/>
        <end position="790"/>
    </location>
</feature>
<feature type="repeat" description="TPR 3">
    <location>
        <begin position="836"/>
        <end position="869"/>
    </location>
</feature>
<feature type="repeat" description="TPR 4">
    <location>
        <begin position="1001"/>
        <end position="1037"/>
    </location>
</feature>
<feature type="repeat" description="TPR 5">
    <location>
        <begin position="1084"/>
        <end position="1118"/>
    </location>
</feature>
<feature type="repeat" description="TPR 6">
    <location>
        <begin position="1119"/>
        <end position="1152"/>
    </location>
</feature>
<feature type="repeat" description="TPR 7">
    <location>
        <begin position="1166"/>
        <end position="1199"/>
    </location>
</feature>
<feature type="repeat" description="TPR 8">
    <location>
        <begin position="1210"/>
        <end position="1244"/>
    </location>
</feature>
<feature type="region of interest" description="Disordered" evidence="2">
    <location>
        <begin position="386"/>
        <end position="405"/>
    </location>
</feature>
<feature type="region of interest" description="Disordered" evidence="2">
    <location>
        <begin position="410"/>
        <end position="444"/>
    </location>
</feature>
<feature type="compositionally biased region" description="Polar residues" evidence="2">
    <location>
        <begin position="386"/>
        <end position="395"/>
    </location>
</feature>
<feature type="splice variant" id="VSP_009884" description="In isoform 2 and isoform 3." evidence="8 10">
    <location>
        <begin position="1"/>
        <end position="1138"/>
    </location>
</feature>
<feature type="splice variant" id="VSP_009881" description="In isoform 4." evidence="8">
    <location>
        <begin position="1"/>
        <end position="453"/>
    </location>
</feature>
<feature type="splice variant" id="VSP_054499" description="In isoform 5." evidence="9">
    <location>
        <begin position="128"/>
        <end position="134"/>
    </location>
</feature>
<feature type="splice variant" id="VSP_009882" description="In isoform 4." evidence="8">
    <original>QLQATKSLCHFYSSVSPNPEACITYHEHWLALAQQLRDREMEGRLLESLGQLYRNLNTARSLRRSLTCIKESLRIFIDLGETDKAAEAWLG</original>
    <variation>KYVPCCWEAIERSVGSSFIHFLSQVISFMSLLCVQVSFRPPNPSAISTALCPQTLRHASPTMSTGWPWLSNSGTGRWKEGCWSPWGSFIGT</variation>
    <location>
        <begin position="959"/>
        <end position="1049"/>
    </location>
</feature>
<feature type="splice variant" id="VSP_009883" description="In isoform 4." evidence="8">
    <location>
        <begin position="1050"/>
        <end position="1288"/>
    </location>
</feature>
<feature type="splice variant" id="VSP_009885" description="In isoform 2 and isoform 3." evidence="8 10">
    <original>LEGYEKALEFATLAARLSTVT</original>
    <variation>MSEQMMQSVGCRISLSVFQFL</variation>
    <location>
        <begin position="1139"/>
        <end position="1159"/>
    </location>
</feature>
<feature type="splice variant" id="VSP_009886" description="In isoform 3." evidence="10">
    <original>DAHDATEYFLLALAAAVLLGDEELQDTIRSRLDNICQSPLWHSRPSGCSSERARWLSGGGLAL</original>
    <variation>VRARLPRFPDSHHPTILLPDSKTMRSLCGGAEKTRVPR</variation>
    <location>
        <begin position="1226"/>
        <end position="1288"/>
    </location>
</feature>
<feature type="sequence variant" id="VAR_064421" description="In MNMN; dbSNP:rs80359890." evidence="6">
    <original>Y</original>
    <variation>H</variation>
    <location>
        <position position="169"/>
    </location>
</feature>
<feature type="sequence variant" id="VAR_052622" description="In dbSNP:rs17722293.">
    <original>G</original>
    <variation>E</variation>
    <location>
        <position position="171"/>
    </location>
</feature>
<feature type="sequence variant" id="VAR_018267" description="In dbSNP:rs6875902." evidence="3 5">
    <original>A</original>
    <variation>S</variation>
    <location>
        <position position="468"/>
    </location>
</feature>
<feature type="sequence variant" id="VAR_018268" description="In CMT4C; dbSNP:rs863224454." evidence="4">
    <original>R</original>
    <variation>Q</variation>
    <location>
        <position position="529"/>
    </location>
</feature>
<feature type="sequence variant" id="VAR_018269" description="In CMT4C; dbSNP:rs80338925." evidence="4">
    <original>E</original>
    <variation>K</variation>
    <location>
        <position position="657"/>
    </location>
</feature>
<feature type="sequence variant" id="VAR_018270" description="In CMT4C; dbSNP:rs80338926." evidence="4">
    <original>R</original>
    <variation>C</variation>
    <location>
        <position position="658"/>
    </location>
</feature>
<feature type="sequence variant" id="VAR_052623" description="In dbSNP:rs17109261.">
    <original>H</original>
    <variation>R</variation>
    <location>
        <position position="696"/>
    </location>
</feature>
<feature type="sequence variant" id="VAR_087587" description="In CMT4C." evidence="7">
    <location>
        <begin position="867"/>
        <end position="1288"/>
    </location>
</feature>
<feature type="sequence variant" id="VAR_087588" description="In CMT4C; uncertain significance; dbSNP:rs758669363." evidence="7">
    <original>G</original>
    <variation>D</variation>
    <location>
        <position position="1217"/>
    </location>
</feature>
<feature type="sequence conflict" description="In Ref. 7; BAB85571." evidence="11" ref="7">
    <original>M</original>
    <variation>R</variation>
    <location>
        <position position="334"/>
    </location>
</feature>
<feature type="sequence conflict" description="In Ref. 7; BAB85571." evidence="11" ref="7">
    <original>V</original>
    <variation>I</variation>
    <location>
        <position position="1158"/>
    </location>
</feature>
<evidence type="ECO:0000255" key="1">
    <source>
        <dbReference type="PROSITE-ProRule" id="PRU00192"/>
    </source>
</evidence>
<evidence type="ECO:0000256" key="2">
    <source>
        <dbReference type="SAM" id="MobiDB-lite"/>
    </source>
</evidence>
<evidence type="ECO:0000269" key="3">
    <source>
    </source>
</evidence>
<evidence type="ECO:0000269" key="4">
    <source>
    </source>
</evidence>
<evidence type="ECO:0000269" key="5">
    <source>
    </source>
</evidence>
<evidence type="ECO:0000269" key="6">
    <source>
    </source>
</evidence>
<evidence type="ECO:0000269" key="7">
    <source>
    </source>
</evidence>
<evidence type="ECO:0000303" key="8">
    <source>
    </source>
</evidence>
<evidence type="ECO:0000303" key="9">
    <source>
    </source>
</evidence>
<evidence type="ECO:0000303" key="10">
    <source>
    </source>
</evidence>
<evidence type="ECO:0000305" key="11"/>
<reference key="1">
    <citation type="journal article" date="2003" name="Am. J. Hum. Genet.">
        <title>Mutations in a gene encoding a novel SH3/TPR domain protein cause autosomal recessive Charcot-Marie-Tooth type 4C neuropathy.</title>
        <authorList>
            <person name="Senderek J."/>
            <person name="Bergmann C."/>
            <person name="Stendel C."/>
            <person name="Kirfel J."/>
            <person name="Verpoorten N."/>
            <person name="De Jonghe P."/>
            <person name="Timmerman V."/>
            <person name="Chrast R."/>
            <person name="Verheijen M.H.G."/>
            <person name="Lemke G."/>
            <person name="Battaloglu E."/>
            <person name="Parman Y."/>
            <person name="Erdem S."/>
            <person name="Tan E."/>
            <person name="Topaloglu H."/>
            <person name="Hahn A."/>
            <person name="Mueller-Felber W."/>
            <person name="Rizzuto N."/>
            <person name="Fabrizi G.M."/>
            <person name="Stuhrmann M."/>
            <person name="Rudnik-Schoeneborn S."/>
            <person name="Zuechner S."/>
            <person name="Schroeder J.M."/>
            <person name="Buchheim E."/>
            <person name="Straub V."/>
            <person name="Klepper J."/>
            <person name="Huehne K."/>
            <person name="Rautenstrauss B."/>
            <person name="Buettner R."/>
            <person name="Nelis E."/>
            <person name="Zerres K."/>
        </authorList>
    </citation>
    <scope>NUCLEOTIDE SEQUENCE [MRNA] (ISOFORM 1)</scope>
    <scope>TISSUE SPECIFICITY</scope>
    <scope>VARIANTS CMT4C GLN-529; LYS-657 AND CYS-658</scope>
    <source>
        <tissue>Sciatic nerve</tissue>
    </source>
</reference>
<reference key="2">
    <citation type="journal article" date="2004" name="Nat. Genet.">
        <title>Complete sequencing and characterization of 21,243 full-length human cDNAs.</title>
        <authorList>
            <person name="Ota T."/>
            <person name="Suzuki Y."/>
            <person name="Nishikawa T."/>
            <person name="Otsuki T."/>
            <person name="Sugiyama T."/>
            <person name="Irie R."/>
            <person name="Wakamatsu A."/>
            <person name="Hayashi K."/>
            <person name="Sato H."/>
            <person name="Nagai K."/>
            <person name="Kimura K."/>
            <person name="Makita H."/>
            <person name="Sekine M."/>
            <person name="Obayashi M."/>
            <person name="Nishi T."/>
            <person name="Shibahara T."/>
            <person name="Tanaka T."/>
            <person name="Ishii S."/>
            <person name="Yamamoto J."/>
            <person name="Saito K."/>
            <person name="Kawai Y."/>
            <person name="Isono Y."/>
            <person name="Nakamura Y."/>
            <person name="Nagahari K."/>
            <person name="Murakami K."/>
            <person name="Yasuda T."/>
            <person name="Iwayanagi T."/>
            <person name="Wagatsuma M."/>
            <person name="Shiratori A."/>
            <person name="Sudo H."/>
            <person name="Hosoiri T."/>
            <person name="Kaku Y."/>
            <person name="Kodaira H."/>
            <person name="Kondo H."/>
            <person name="Sugawara M."/>
            <person name="Takahashi M."/>
            <person name="Kanda K."/>
            <person name="Yokoi T."/>
            <person name="Furuya T."/>
            <person name="Kikkawa E."/>
            <person name="Omura Y."/>
            <person name="Abe K."/>
            <person name="Kamihara K."/>
            <person name="Katsuta N."/>
            <person name="Sato K."/>
            <person name="Tanikawa M."/>
            <person name="Yamazaki M."/>
            <person name="Ninomiya K."/>
            <person name="Ishibashi T."/>
            <person name="Yamashita H."/>
            <person name="Murakawa K."/>
            <person name="Fujimori K."/>
            <person name="Tanai H."/>
            <person name="Kimata M."/>
            <person name="Watanabe M."/>
            <person name="Hiraoka S."/>
            <person name="Chiba Y."/>
            <person name="Ishida S."/>
            <person name="Ono Y."/>
            <person name="Takiguchi S."/>
            <person name="Watanabe S."/>
            <person name="Yosida M."/>
            <person name="Hotuta T."/>
            <person name="Kusano J."/>
            <person name="Kanehori K."/>
            <person name="Takahashi-Fujii A."/>
            <person name="Hara H."/>
            <person name="Tanase T.-O."/>
            <person name="Nomura Y."/>
            <person name="Togiya S."/>
            <person name="Komai F."/>
            <person name="Hara R."/>
            <person name="Takeuchi K."/>
            <person name="Arita M."/>
            <person name="Imose N."/>
            <person name="Musashino K."/>
            <person name="Yuuki H."/>
            <person name="Oshima A."/>
            <person name="Sasaki N."/>
            <person name="Aotsuka S."/>
            <person name="Yoshikawa Y."/>
            <person name="Matsunawa H."/>
            <person name="Ichihara T."/>
            <person name="Shiohata N."/>
            <person name="Sano S."/>
            <person name="Moriya S."/>
            <person name="Momiyama H."/>
            <person name="Satoh N."/>
            <person name="Takami S."/>
            <person name="Terashima Y."/>
            <person name="Suzuki O."/>
            <person name="Nakagawa S."/>
            <person name="Senoh A."/>
            <person name="Mizoguchi H."/>
            <person name="Goto Y."/>
            <person name="Shimizu F."/>
            <person name="Wakebe H."/>
            <person name="Hishigaki H."/>
            <person name="Watanabe T."/>
            <person name="Sugiyama A."/>
            <person name="Takemoto M."/>
            <person name="Kawakami B."/>
            <person name="Yamazaki M."/>
            <person name="Watanabe K."/>
            <person name="Kumagai A."/>
            <person name="Itakura S."/>
            <person name="Fukuzumi Y."/>
            <person name="Fujimori Y."/>
            <person name="Komiyama M."/>
            <person name="Tashiro H."/>
            <person name="Tanigami A."/>
            <person name="Fujiwara T."/>
            <person name="Ono T."/>
            <person name="Yamada K."/>
            <person name="Fujii Y."/>
            <person name="Ozaki K."/>
            <person name="Hirao M."/>
            <person name="Ohmori Y."/>
            <person name="Kawabata A."/>
            <person name="Hikiji T."/>
            <person name="Kobatake N."/>
            <person name="Inagaki H."/>
            <person name="Ikema Y."/>
            <person name="Okamoto S."/>
            <person name="Okitani R."/>
            <person name="Kawakami T."/>
            <person name="Noguchi S."/>
            <person name="Itoh T."/>
            <person name="Shigeta K."/>
            <person name="Senba T."/>
            <person name="Matsumura K."/>
            <person name="Nakajima Y."/>
            <person name="Mizuno T."/>
            <person name="Morinaga M."/>
            <person name="Sasaki M."/>
            <person name="Togashi T."/>
            <person name="Oyama M."/>
            <person name="Hata H."/>
            <person name="Watanabe M."/>
            <person name="Komatsu T."/>
            <person name="Mizushima-Sugano J."/>
            <person name="Satoh T."/>
            <person name="Shirai Y."/>
            <person name="Takahashi Y."/>
            <person name="Nakagawa K."/>
            <person name="Okumura K."/>
            <person name="Nagase T."/>
            <person name="Nomura N."/>
            <person name="Kikuchi H."/>
            <person name="Masuho Y."/>
            <person name="Yamashita R."/>
            <person name="Nakai K."/>
            <person name="Yada T."/>
            <person name="Nakamura Y."/>
            <person name="Ohara O."/>
            <person name="Isogai T."/>
            <person name="Sugano S."/>
        </authorList>
    </citation>
    <scope>NUCLEOTIDE SEQUENCE [LARGE SCALE MRNA] (ISOFORMS 2 AND 4)</scope>
    <source>
        <tissue>Hippocampus</tissue>
    </source>
</reference>
<reference key="3">
    <citation type="journal article" date="2004" name="Proc. Natl. Acad. Sci. U.S.A.">
        <title>Large-scale cDNA transfection screening for genes related to cancer development and progression.</title>
        <authorList>
            <person name="Wan D."/>
            <person name="Gong Y."/>
            <person name="Qin W."/>
            <person name="Zhang P."/>
            <person name="Li J."/>
            <person name="Wei L."/>
            <person name="Zhou X."/>
            <person name="Li H."/>
            <person name="Qiu X."/>
            <person name="Zhong F."/>
            <person name="He L."/>
            <person name="Yu J."/>
            <person name="Yao G."/>
            <person name="Jiang H."/>
            <person name="Qian L."/>
            <person name="Yu Y."/>
            <person name="Shu H."/>
            <person name="Chen X."/>
            <person name="Xu H."/>
            <person name="Guo M."/>
            <person name="Pan Z."/>
            <person name="Chen Y."/>
            <person name="Ge C."/>
            <person name="Yang S."/>
            <person name="Gu J."/>
        </authorList>
    </citation>
    <scope>NUCLEOTIDE SEQUENCE [LARGE SCALE MRNA] (ISOFORM 3)</scope>
</reference>
<reference key="4">
    <citation type="journal article" date="2004" name="Nature">
        <title>The DNA sequence and comparative analysis of human chromosome 5.</title>
        <authorList>
            <person name="Schmutz J."/>
            <person name="Martin J."/>
            <person name="Terry A."/>
            <person name="Couronne O."/>
            <person name="Grimwood J."/>
            <person name="Lowry S."/>
            <person name="Gordon L.A."/>
            <person name="Scott D."/>
            <person name="Xie G."/>
            <person name="Huang W."/>
            <person name="Hellsten U."/>
            <person name="Tran-Gyamfi M."/>
            <person name="She X."/>
            <person name="Prabhakar S."/>
            <person name="Aerts A."/>
            <person name="Altherr M."/>
            <person name="Bajorek E."/>
            <person name="Black S."/>
            <person name="Branscomb E."/>
            <person name="Caoile C."/>
            <person name="Challacombe J.F."/>
            <person name="Chan Y.M."/>
            <person name="Denys M."/>
            <person name="Detter J.C."/>
            <person name="Escobar J."/>
            <person name="Flowers D."/>
            <person name="Fotopulos D."/>
            <person name="Glavina T."/>
            <person name="Gomez M."/>
            <person name="Gonzales E."/>
            <person name="Goodstein D."/>
            <person name="Grigoriev I."/>
            <person name="Groza M."/>
            <person name="Hammon N."/>
            <person name="Hawkins T."/>
            <person name="Haydu L."/>
            <person name="Israni S."/>
            <person name="Jett J."/>
            <person name="Kadner K."/>
            <person name="Kimball H."/>
            <person name="Kobayashi A."/>
            <person name="Lopez F."/>
            <person name="Lou Y."/>
            <person name="Martinez D."/>
            <person name="Medina C."/>
            <person name="Morgan J."/>
            <person name="Nandkeshwar R."/>
            <person name="Noonan J.P."/>
            <person name="Pitluck S."/>
            <person name="Pollard M."/>
            <person name="Predki P."/>
            <person name="Priest J."/>
            <person name="Ramirez L."/>
            <person name="Retterer J."/>
            <person name="Rodriguez A."/>
            <person name="Rogers S."/>
            <person name="Salamov A."/>
            <person name="Salazar A."/>
            <person name="Thayer N."/>
            <person name="Tice H."/>
            <person name="Tsai M."/>
            <person name="Ustaszewska A."/>
            <person name="Vo N."/>
            <person name="Wheeler J."/>
            <person name="Wu K."/>
            <person name="Yang J."/>
            <person name="Dickson M."/>
            <person name="Cheng J.-F."/>
            <person name="Eichler E.E."/>
            <person name="Olsen A."/>
            <person name="Pennacchio L.A."/>
            <person name="Rokhsar D.S."/>
            <person name="Richardson P."/>
            <person name="Lucas S.M."/>
            <person name="Myers R.M."/>
            <person name="Rubin E.M."/>
        </authorList>
    </citation>
    <scope>NUCLEOTIDE SEQUENCE [LARGE SCALE GENOMIC DNA]</scope>
</reference>
<reference key="5">
    <citation type="submission" date="2005-09" db="EMBL/GenBank/DDBJ databases">
        <authorList>
            <person name="Mural R.J."/>
            <person name="Istrail S."/>
            <person name="Sutton G.G."/>
            <person name="Florea L."/>
            <person name="Halpern A.L."/>
            <person name="Mobarry C.M."/>
            <person name="Lippert R."/>
            <person name="Walenz B."/>
            <person name="Shatkay H."/>
            <person name="Dew I."/>
            <person name="Miller J.R."/>
            <person name="Flanigan M.J."/>
            <person name="Edwards N.J."/>
            <person name="Bolanos R."/>
            <person name="Fasulo D."/>
            <person name="Halldorsson B.V."/>
            <person name="Hannenhalli S."/>
            <person name="Turner R."/>
            <person name="Yooseph S."/>
            <person name="Lu F."/>
            <person name="Nusskern D.R."/>
            <person name="Shue B.C."/>
            <person name="Zheng X.H."/>
            <person name="Zhong F."/>
            <person name="Delcher A.L."/>
            <person name="Huson D.H."/>
            <person name="Kravitz S.A."/>
            <person name="Mouchard L."/>
            <person name="Reinert K."/>
            <person name="Remington K.A."/>
            <person name="Clark A.G."/>
            <person name="Waterman M.S."/>
            <person name="Eichler E.E."/>
            <person name="Adams M.D."/>
            <person name="Hunkapiller M.W."/>
            <person name="Myers E.W."/>
            <person name="Venter J.C."/>
        </authorList>
    </citation>
    <scope>NUCLEOTIDE SEQUENCE [LARGE SCALE GENOMIC DNA]</scope>
</reference>
<reference key="6">
    <citation type="journal article" date="2004" name="Genome Res.">
        <title>The status, quality, and expansion of the NIH full-length cDNA project: the Mammalian Gene Collection (MGC).</title>
        <authorList>
            <consortium name="The MGC Project Team"/>
        </authorList>
    </citation>
    <scope>NUCLEOTIDE SEQUENCE [LARGE SCALE MRNA] (ISOFORMS 1 AND 5)</scope>
    <scope>VARIANT SER-468</scope>
</reference>
<reference key="7">
    <citation type="journal article" date="2001" name="DNA Res.">
        <title>Prediction of the coding sequences of unidentified human genes. XXII. The complete sequences of 50 new cDNA clones which code for large proteins.</title>
        <authorList>
            <person name="Nagase T."/>
            <person name="Kikuno R."/>
            <person name="Ohara O."/>
        </authorList>
    </citation>
    <scope>NUCLEOTIDE SEQUENCE [LARGE SCALE MRNA] OF 334-1288 (ISOFORM 1)</scope>
    <scope>VARIANT SER-468</scope>
    <source>
        <tissue>Brain</tissue>
    </source>
</reference>
<reference key="8">
    <citation type="journal article" date="2010" name="N. Engl. J. Med.">
        <title>Whole-genome sequencing in a patient with Charcot-Marie-Tooth neuropathy.</title>
        <authorList>
            <person name="Lupski J.R."/>
            <person name="Reid J.G."/>
            <person name="Gonzaga-Jauregui C."/>
            <person name="Rio Deiros D."/>
            <person name="Chen D.C."/>
            <person name="Nazareth L."/>
            <person name="Bainbridge M."/>
            <person name="Dinh H."/>
            <person name="Jing C."/>
            <person name="Wheeler D.A."/>
            <person name="McGuire A.L."/>
            <person name="Zhang F."/>
            <person name="Stankiewicz P."/>
            <person name="Halperin J.J."/>
            <person name="Yang C."/>
            <person name="Gehman C."/>
            <person name="Guo D."/>
            <person name="Irikat R.K."/>
            <person name="Tom W."/>
            <person name="Fantin N.J."/>
            <person name="Muzny D.M."/>
            <person name="Gibbs R.A."/>
        </authorList>
    </citation>
    <scope>VARIANT MNMN HIS-169</scope>
</reference>
<reference key="9">
    <citation type="journal article" date="2021" name="BMC Med. Genomics">
        <title>Novel homozygous mutations in Pakistani families with Charcot-Marie-Tooth disease.</title>
        <authorList>
            <person name="Kanwal S."/>
            <person name="Choi Y.J."/>
            <person name="Lim S.O."/>
            <person name="Choi H.J."/>
            <person name="Park J.H."/>
            <person name="Nuzhat R."/>
            <person name="Khan A."/>
            <person name="Perveen S."/>
            <person name="Choi B.O."/>
            <person name="Chung K.W."/>
        </authorList>
    </citation>
    <scope>VARIANTS CMT4C 867-GLN--LEU-1288 DEL AND ASP-1217</scope>
</reference>
<keyword id="KW-0025">Alternative splicing</keyword>
<keyword id="KW-0144">Charcot-Marie-Tooth disease</keyword>
<keyword id="KW-0225">Disease variant</keyword>
<keyword id="KW-0523">Neurodegeneration</keyword>
<keyword id="KW-0622">Neuropathy</keyword>
<keyword id="KW-1267">Proteomics identification</keyword>
<keyword id="KW-1185">Reference proteome</keyword>
<keyword id="KW-0677">Repeat</keyword>
<keyword id="KW-0728">SH3 domain</keyword>
<keyword id="KW-0802">TPR repeat</keyword>
<proteinExistence type="evidence at protein level"/>
<sequence>MGGCFCIPRERSLTRGPGKETPSKDPTVSSECIASSEYKEKCFLPQNINPDLTLSFCVKSRSRRCVNGPLQEAARRRLWALENEDQEVRMLFKDLSARLVSIQSQRAQFLITFKTMEEIWKFSTYLNLGYVSMCLEHLLFDHKYWLNCILVEDTEIQVSVDDKHLETIYLGLLIQEGHFFCRALCSVTPPAEKEGECLTLCKNELISVKMAEAGSELEGVSLVTGQRGLVLVSALEPLPLPFHQWFLKNYPGSCGLSRKRDWTGSYQIGRGRCKALTGYEPGEKDELNFYQGESIEIIGFVIPGLQWFIGKSTSSGQVGFVPTRNIDPDSYSPMSRNSAFLSDEERCSLLALGSDKQTECSSFLHTLARTDITSVYRLSGFESIQNPPNDLSASQPEGFKEVRPGRAWEEHQAVGSRQSSSSEDSSLEEELLSATSDSYRLPEPDDLDDPELLMDLSTGQEEEAENFAPILAFLDHEGYADHFKSLYDFSFSFLTSSFYSFSEEDEFVAYLEASRKWAKKSHMTWAHARLCFLLGRLSIRKVKLSQARVYFEEAIHILNGAFEDLSLVATLYINLAAIYLKQRLRHKGSALLEKAGALLACLPDRESSAKHELDVVAYVLRQGIVVGSSPLEARACFLAIRLLLSLGRHEEVLPFAERLQLLSGHPPASEAVASVLSFLYDKKYLPHLAVASVQQHGIQSAQGMSLPIWQVHLVLQNTTKLLGFPSPGWGEVSALACPMLRQALAACEELADRSTQRALCLILSKVYLEHRSPDGAIHYLSQALVLGQLLGEQESFESSLCLAWAYLLASQAKKALDVLEPLLCSLKETESLTQRGVIYNLLGLALQGEGRVNRAAKSYLRALNRAQEVGDVHNQAVAMANLGHLSLKSWAQHPARNYLLQAVRLYCELQASKETDMELVQVFLWLAQVLVSGHQLTHGLLCYEMALLFGLRHRHLKSQLQATKSLCHFYSSVSPNPEACITYHEHWLALAQQLRDREMEGRLLESLGQLYRNLNTARSLRRSLTCIKESLRIFIDLGETDKAAEAWLGAGRLHYLMQEDELVELCLQAAIQTALKSEEPLLALKLYEEAGDVFFNGTRHRHHAVEYYRAGAVPLARRLKAVRTELRIFNKLTELQISLEGYEKALEFATLAARLSTVTGDQRQELVAFHRLATVYYSLHMYEMAEDCYLKTLSLCPPWLQSPKEALYYAKVYYRLGRLTFCQLKDAHDATEYFLLALAAAVLLGDEELQDTIRSRLDNICQSPLWHSRPSGCSSERARWLSGGGLAL</sequence>
<comment type="alternative products">
    <event type="alternative splicing"/>
    <isoform>
        <id>Q8TF17-1</id>
        <name>1</name>
        <sequence type="displayed"/>
    </isoform>
    <isoform>
        <id>Q8TF17-2</id>
        <name>2</name>
        <sequence type="described" ref="VSP_009884 VSP_009885"/>
    </isoform>
    <isoform>
        <id>Q8TF17-3</id>
        <name>3</name>
        <sequence type="described" ref="VSP_009884 VSP_009885 VSP_009886"/>
    </isoform>
    <isoform>
        <id>Q8TF17-4</id>
        <name>4</name>
        <sequence type="described" ref="VSP_009881 VSP_009882 VSP_009883"/>
    </isoform>
    <isoform>
        <id>Q8TF17-5</id>
        <name>5</name>
        <sequence type="described" ref="VSP_054499"/>
    </isoform>
</comment>
<comment type="tissue specificity">
    <text evidence="4">Strongly expressed in brain and spinal cord. Expressed at equal level in spinal cord and sciatic nerve. Weakly expressed in striated muscle.</text>
</comment>
<comment type="disease" evidence="4 7">
    <disease id="DI-00288">
        <name>Charcot-Marie-Tooth disease, demyelinating, type 4C</name>
        <acronym>CMT4C</acronym>
        <description>A recessive demyelinating form of Charcot-Marie-Tooth disease, a disorder of the peripheral nervous system, characterized by progressive weakness and atrophy, initially of the peroneal muscles and later of the distal muscles of the arms. Charcot-Marie-Tooth disease is classified in two main groups on the basis of electrophysiologic properties and histopathology: primary peripheral demyelinating neuropathies (designated CMT1 when they are dominantly inherited) and primary peripheral axonal neuropathies (CMT2). Demyelinating neuropathies are characterized by severely reduced nerve conduction velocities (less than 38 m/sec), segmental demyelination and remyelination with onion bulb formations on nerve biopsy, slowly progressive distal muscle atrophy and weakness, absent deep tendon reflexes, and hollow feet. By convention autosomal recessive forms of demyelinating Charcot-Marie-Tooth disease are designated CMT4. CMT4C is characterized by onset in childhood, early-onset scoliosis and a distinct Schwann cell pathology.</description>
        <dbReference type="MIM" id="601596"/>
    </disease>
    <text>The disease is caused by variants affecting the gene represented in this entry.</text>
</comment>
<comment type="disease" evidence="6">
    <disease id="DI-02929">
        <name>Mononeuropathy of the median nerve mild</name>
        <acronym>MNMN</acronym>
        <description>A disease characterized by median nerve mononeuropathy at the wrist. The clinical presentation ranges from a mild phenotype, consistent with carpal tunnel syndrome, to a severe median nerve mononeuropathy at the wrist associated with evidence of a more widespread axonal polyneuropathy. The latter phenotype is similar to that of patients with hereditary neuropathy with liability to pressure palsies.</description>
        <dbReference type="MIM" id="613353"/>
    </disease>
    <text>The disease is caused by variants affecting the gene represented in this entry.</text>
</comment>
<comment type="online information" name="Inherited peripheral neuropathies mutation db">
    <link uri="https://uantwerpen.vib.be/CMTMutations"/>
</comment>
<gene>
    <name type="primary">SH3TC2</name>
    <name type="synonym">KIAA1985</name>
    <name type="ORF">PP12494</name>
</gene>
<dbReference type="EMBL" id="AY341075">
    <property type="protein sequence ID" value="AAR03497.1"/>
    <property type="molecule type" value="mRNA"/>
</dbReference>
<dbReference type="EMBL" id="AK124854">
    <property type="protein sequence ID" value="BAG54107.1"/>
    <property type="molecule type" value="mRNA"/>
</dbReference>
<dbReference type="EMBL" id="AK127248">
    <property type="protein sequence ID" value="BAC86899.1"/>
    <property type="molecule type" value="mRNA"/>
</dbReference>
<dbReference type="EMBL" id="AK023667">
    <property type="protein sequence ID" value="BAB14631.1"/>
    <property type="molecule type" value="mRNA"/>
</dbReference>
<dbReference type="EMBL" id="AF370410">
    <property type="protein sequence ID" value="AAQ15246.1"/>
    <property type="molecule type" value="mRNA"/>
</dbReference>
<dbReference type="EMBL" id="AC011364">
    <property type="status" value="NOT_ANNOTATED_CDS"/>
    <property type="molecule type" value="Genomic_DNA"/>
</dbReference>
<dbReference type="EMBL" id="AC116312">
    <property type="status" value="NOT_ANNOTATED_CDS"/>
    <property type="molecule type" value="Genomic_DNA"/>
</dbReference>
<dbReference type="EMBL" id="CH471062">
    <property type="protein sequence ID" value="EAW61796.1"/>
    <property type="molecule type" value="Genomic_DNA"/>
</dbReference>
<dbReference type="EMBL" id="BC113879">
    <property type="protein sequence ID" value="AAI13880.1"/>
    <property type="molecule type" value="mRNA"/>
</dbReference>
<dbReference type="EMBL" id="BC114486">
    <property type="protein sequence ID" value="AAI14487.1"/>
    <property type="molecule type" value="mRNA"/>
</dbReference>
<dbReference type="EMBL" id="AB075865">
    <property type="protein sequence ID" value="BAB85571.1"/>
    <property type="molecule type" value="mRNA"/>
</dbReference>
<dbReference type="CCDS" id="CCDS4293.1">
    <molecule id="Q8TF17-1"/>
</dbReference>
<dbReference type="RefSeq" id="NP_078853.2">
    <molecule id="Q8TF17-1"/>
    <property type="nucleotide sequence ID" value="NM_024577.3"/>
</dbReference>
<dbReference type="BioGRID" id="122758">
    <property type="interactions" value="1"/>
</dbReference>
<dbReference type="FunCoup" id="Q8TF17">
    <property type="interactions" value="361"/>
</dbReference>
<dbReference type="STRING" id="9606.ENSP00000423660"/>
<dbReference type="iPTMnet" id="Q8TF17"/>
<dbReference type="PhosphoSitePlus" id="Q8TF17"/>
<dbReference type="BioMuta" id="SH3TC2"/>
<dbReference type="DMDM" id="46396469"/>
<dbReference type="jPOST" id="Q8TF17"/>
<dbReference type="MassIVE" id="Q8TF17"/>
<dbReference type="PaxDb" id="9606-ENSP00000423660"/>
<dbReference type="PeptideAtlas" id="Q8TF17"/>
<dbReference type="ProteomicsDB" id="60324"/>
<dbReference type="ProteomicsDB" id="74536">
    <molecule id="Q8TF17-1"/>
</dbReference>
<dbReference type="ProteomicsDB" id="74539">
    <molecule id="Q8TF17-4"/>
</dbReference>
<dbReference type="Antibodypedia" id="49222">
    <property type="antibodies" value="78 antibodies from 17 providers"/>
</dbReference>
<dbReference type="DNASU" id="79628"/>
<dbReference type="Ensembl" id="ENST00000512049.5">
    <molecule id="Q8TF17-5"/>
    <property type="protein sequence ID" value="ENSP00000421860.1"/>
    <property type="gene ID" value="ENSG00000169247.14"/>
</dbReference>
<dbReference type="Ensembl" id="ENST00000515425.6">
    <molecule id="Q8TF17-1"/>
    <property type="protein sequence ID" value="ENSP00000423660.1"/>
    <property type="gene ID" value="ENSG00000169247.14"/>
</dbReference>
<dbReference type="GeneID" id="79628"/>
<dbReference type="KEGG" id="hsa:79628"/>
<dbReference type="MANE-Select" id="ENST00000515425.6">
    <property type="protein sequence ID" value="ENSP00000423660.1"/>
    <property type="RefSeq nucleotide sequence ID" value="NM_024577.4"/>
    <property type="RefSeq protein sequence ID" value="NP_078853.2"/>
</dbReference>
<dbReference type="UCSC" id="uc003lpu.4">
    <molecule id="Q8TF17-1"/>
    <property type="organism name" value="human"/>
</dbReference>
<dbReference type="AGR" id="HGNC:29427"/>
<dbReference type="CTD" id="79628"/>
<dbReference type="DisGeNET" id="79628"/>
<dbReference type="GeneCards" id="SH3TC2"/>
<dbReference type="GeneReviews" id="SH3TC2"/>
<dbReference type="HGNC" id="HGNC:29427">
    <property type="gene designation" value="SH3TC2"/>
</dbReference>
<dbReference type="HPA" id="ENSG00000169247">
    <property type="expression patterns" value="Tissue enhanced (retina, testis)"/>
</dbReference>
<dbReference type="MalaCards" id="SH3TC2"/>
<dbReference type="MIM" id="601596">
    <property type="type" value="phenotype"/>
</dbReference>
<dbReference type="MIM" id="608206">
    <property type="type" value="gene"/>
</dbReference>
<dbReference type="MIM" id="613353">
    <property type="type" value="phenotype"/>
</dbReference>
<dbReference type="neXtProt" id="NX_Q8TF17"/>
<dbReference type="OpenTargets" id="ENSG00000169247"/>
<dbReference type="Orphanet" id="99949">
    <property type="disease" value="Charcot-Marie-Tooth disease type 4C"/>
</dbReference>
<dbReference type="PharmGKB" id="PA134951912"/>
<dbReference type="VEuPathDB" id="HostDB:ENSG00000169247"/>
<dbReference type="eggNOG" id="ENOG502R9YA">
    <property type="taxonomic scope" value="Eukaryota"/>
</dbReference>
<dbReference type="GeneTree" id="ENSGT00530000063812"/>
<dbReference type="HOGENOM" id="CLU_1739912_0_0_1"/>
<dbReference type="InParanoid" id="Q8TF17"/>
<dbReference type="OMA" id="HLETMYL"/>
<dbReference type="OrthoDB" id="9321902at2759"/>
<dbReference type="PAN-GO" id="Q8TF17">
    <property type="GO annotations" value="3 GO annotations based on evolutionary models"/>
</dbReference>
<dbReference type="PhylomeDB" id="Q8TF17"/>
<dbReference type="TreeFam" id="TF333167"/>
<dbReference type="PathwayCommons" id="Q8TF17"/>
<dbReference type="BioGRID-ORCS" id="79628">
    <property type="hits" value="11 hits in 1144 CRISPR screens"/>
</dbReference>
<dbReference type="ChiTaRS" id="SH3TC2">
    <property type="organism name" value="human"/>
</dbReference>
<dbReference type="GeneWiki" id="SH3TC2"/>
<dbReference type="GenomeRNAi" id="79628"/>
<dbReference type="Pharos" id="Q8TF17">
    <property type="development level" value="Tbio"/>
</dbReference>
<dbReference type="PRO" id="PR:Q8TF17"/>
<dbReference type="Proteomes" id="UP000005640">
    <property type="component" value="Chromosome 5"/>
</dbReference>
<dbReference type="RNAct" id="Q8TF17">
    <property type="molecule type" value="protein"/>
</dbReference>
<dbReference type="Bgee" id="ENSG00000169247">
    <property type="expression patterns" value="Expressed in corpus callosum and 110 other cell types or tissues"/>
</dbReference>
<dbReference type="ExpressionAtlas" id="Q8TF17">
    <property type="expression patterns" value="baseline and differential"/>
</dbReference>
<dbReference type="GO" id="GO:0031410">
    <property type="term" value="C:cytoplasmic vesicle"/>
    <property type="evidence" value="ECO:0007669"/>
    <property type="project" value="Ensembl"/>
</dbReference>
<dbReference type="GO" id="GO:0005886">
    <property type="term" value="C:plasma membrane"/>
    <property type="evidence" value="ECO:0007669"/>
    <property type="project" value="Ensembl"/>
</dbReference>
<dbReference type="GO" id="GO:0032287">
    <property type="term" value="P:peripheral nervous system myelin maintenance"/>
    <property type="evidence" value="ECO:0007669"/>
    <property type="project" value="Ensembl"/>
</dbReference>
<dbReference type="GO" id="GO:1901184">
    <property type="term" value="P:regulation of ERBB signaling pathway"/>
    <property type="evidence" value="ECO:0000318"/>
    <property type="project" value="GO_Central"/>
</dbReference>
<dbReference type="GO" id="GO:0033157">
    <property type="term" value="P:regulation of intracellular protein transport"/>
    <property type="evidence" value="ECO:0000318"/>
    <property type="project" value="GO_Central"/>
</dbReference>
<dbReference type="Gene3D" id="2.30.30.40">
    <property type="entry name" value="SH3 Domains"/>
    <property type="match status" value="1"/>
</dbReference>
<dbReference type="Gene3D" id="1.25.40.10">
    <property type="entry name" value="Tetratricopeptide repeat domain"/>
    <property type="match status" value="2"/>
</dbReference>
<dbReference type="InterPro" id="IPR036028">
    <property type="entry name" value="SH3-like_dom_sf"/>
</dbReference>
<dbReference type="InterPro" id="IPR001452">
    <property type="entry name" value="SH3_domain"/>
</dbReference>
<dbReference type="InterPro" id="IPR042772">
    <property type="entry name" value="SH3TC1/SH3TC2"/>
</dbReference>
<dbReference type="InterPro" id="IPR011990">
    <property type="entry name" value="TPR-like_helical_dom_sf"/>
</dbReference>
<dbReference type="InterPro" id="IPR019734">
    <property type="entry name" value="TPR_rpt"/>
</dbReference>
<dbReference type="PANTHER" id="PTHR22647:SF2">
    <property type="entry name" value="SH3 DOMAIN AND TETRATRICOPEPTIDE REPEAT-CONTAINING PROTEIN 2"/>
    <property type="match status" value="1"/>
</dbReference>
<dbReference type="PANTHER" id="PTHR22647">
    <property type="entry name" value="SH3 DOMAIN AND TETRATRICOPEPTIDE REPEATS CONTAINING PROTEIN"/>
    <property type="match status" value="1"/>
</dbReference>
<dbReference type="Pfam" id="PF00018">
    <property type="entry name" value="SH3_1"/>
    <property type="match status" value="1"/>
</dbReference>
<dbReference type="SMART" id="SM00326">
    <property type="entry name" value="SH3"/>
    <property type="match status" value="1"/>
</dbReference>
<dbReference type="SMART" id="SM00028">
    <property type="entry name" value="TPR"/>
    <property type="match status" value="4"/>
</dbReference>
<dbReference type="SUPFAM" id="SSF50044">
    <property type="entry name" value="SH3-domain"/>
    <property type="match status" value="1"/>
</dbReference>
<dbReference type="SUPFAM" id="SSF48452">
    <property type="entry name" value="TPR-like"/>
    <property type="match status" value="3"/>
</dbReference>
<dbReference type="PROSITE" id="PS50002">
    <property type="entry name" value="SH3"/>
    <property type="match status" value="2"/>
</dbReference>
<accession>Q8TF17</accession>
<accession>B3KWE5</accession>
<accession>Q14CC0</accession>
<accession>Q14CF5</accession>
<accession>Q9H8I5</accession>
<organism>
    <name type="scientific">Homo sapiens</name>
    <name type="common">Human</name>
    <dbReference type="NCBI Taxonomy" id="9606"/>
    <lineage>
        <taxon>Eukaryota</taxon>
        <taxon>Metazoa</taxon>
        <taxon>Chordata</taxon>
        <taxon>Craniata</taxon>
        <taxon>Vertebrata</taxon>
        <taxon>Euteleostomi</taxon>
        <taxon>Mammalia</taxon>
        <taxon>Eutheria</taxon>
        <taxon>Euarchontoglires</taxon>
        <taxon>Primates</taxon>
        <taxon>Haplorrhini</taxon>
        <taxon>Catarrhini</taxon>
        <taxon>Hominidae</taxon>
        <taxon>Homo</taxon>
    </lineage>
</organism>
<protein>
    <recommendedName>
        <fullName>SH3 domain and tetratricopeptide repeat-containing protein 2</fullName>
    </recommendedName>
</protein>
<name>S3TC2_HUMAN</name>